<reference key="1">
    <citation type="journal article" date="2001" name="Genome Res.">
        <title>The complete genome sequence of the lactic acid bacterium Lactococcus lactis ssp. lactis IL1403.</title>
        <authorList>
            <person name="Bolotin A."/>
            <person name="Wincker P."/>
            <person name="Mauger S."/>
            <person name="Jaillon O."/>
            <person name="Malarme K."/>
            <person name="Weissenbach J."/>
            <person name="Ehrlich S.D."/>
            <person name="Sorokin A."/>
        </authorList>
    </citation>
    <scope>NUCLEOTIDE SEQUENCE [LARGE SCALE GENOMIC DNA]</scope>
    <source>
        <strain>IL1403</strain>
    </source>
</reference>
<name>FTSK_LACLA</name>
<keyword id="KW-0067">ATP-binding</keyword>
<keyword id="KW-0131">Cell cycle</keyword>
<keyword id="KW-0132">Cell division</keyword>
<keyword id="KW-1003">Cell membrane</keyword>
<keyword id="KW-0159">Chromosome partition</keyword>
<keyword id="KW-0238">DNA-binding</keyword>
<keyword id="KW-0472">Membrane</keyword>
<keyword id="KW-0547">Nucleotide-binding</keyword>
<keyword id="KW-1185">Reference proteome</keyword>
<keyword id="KW-0812">Transmembrane</keyword>
<keyword id="KW-1133">Transmembrane helix</keyword>
<comment type="function">
    <text evidence="1">Essential cell division protein that coordinates cell division and chromosome segregation. The N-terminus is involved in assembly of the cell-division machinery. The C-terminus functions as a DNA motor that moves dsDNA in an ATP-dependent manner towards the difSL recombination site, which is located within the replication terminus region. Required for activation of the XerS recombinase, allowing activation of chromosome unlinking by recombination (By similarity).</text>
</comment>
<comment type="subunit">
    <text evidence="1">Homohexamer. Forms a ring that surrounds DNA (By similarity).</text>
</comment>
<comment type="subcellular location">
    <subcellularLocation>
        <location evidence="1">Cell membrane</location>
        <topology evidence="1">Multi-pass membrane protein</topology>
    </subcellularLocation>
    <text evidence="1">Located at the septum.</text>
</comment>
<comment type="domain">
    <text evidence="1">Consists of an N-terminal domain, which is sufficient for the localization to the septal ring and is required for cell division, followed by a linker domain, and a C-terminal domain, which forms the translocation motor involved in chromosome segregation. The C-terminal domain can be further subdivided into alpha, beta and gamma subdomains. The alpha and beta subdomains form the DNA pump, and the gamma subdomain is a regulatory subdomain (By similarity).</text>
</comment>
<comment type="similarity">
    <text evidence="5">Belongs to the FtsK/SpoIIIE/SftA family.</text>
</comment>
<proteinExistence type="inferred from homology"/>
<sequence length="763" mass="83627">MSESKKMPAKKKTTRRNTKKEQQKKAATRKMIAFFVGLLLILFALARLGIVGVLLYNIVRLFVGSLAIVFLLLLAGLMIISVFRKQVLKENKRIIPAIILTFIGLMFVFQIRLHQGFNETFHLIWSDLMAGRVIHFVGSGVIGALITEPAKALFSVIGVYIIAAVLWLVAIYLMIPGLFPKMREDLHQRLAKWKEKHAEKVEAKKAAKALAELEKKQAVAEREELPEAAENSLFTSAPTEIPINIPEAPFEENETESPVLAEVPLDDEPVNFSNTNNYNGNYKLPTIDLLAEVPVKNQSGERENVRKNIGILEETFKSFGIGANVESAVVGPSITKYEIKLATGTKVSRVVNLSDDLALALAAKDIRIEAPIPGKSLVGVEIPNAEVAMVGFREMWEAGKTNPSKLLEIPLGKSLDGGIRTFDLTRMPHLLVAGSTGSGKSVAVNGIITSILMKALPSQVKFLMVDPKMVELSVYNDIPHLLIPVVTNPRKASRALQKVVDQMEERYELFSRYGVRNIAGYNEKVQRYNAESDEKMLELPLIVVIVDELADLMMVASKEVEDAIIRLGQKARAAGIHMILATQRPSVDVISGLIKANVPSRIAFAVSSGTDSRTILDTNGAEKLLGRGDMLFKPIDENHPIRLQGAFLSDDDVESVVTFIKDQSEAQYDESFDPGEVDESQVGTGASNTGSGDPLFEEARNMVIMAQKASTAQLQRALKVGFNRASDLMNELEAQGIVGPAKGTTPRKVLVSPDGEFIGGVEE</sequence>
<protein>
    <recommendedName>
        <fullName>DNA translocase FtsK</fullName>
    </recommendedName>
</protein>
<feature type="chain" id="PRO_0000098264" description="DNA translocase FtsK">
    <location>
        <begin position="1"/>
        <end position="763"/>
    </location>
</feature>
<feature type="transmembrane region" description="Helical" evidence="2">
    <location>
        <begin position="34"/>
        <end position="56"/>
    </location>
</feature>
<feature type="transmembrane region" description="Helical" evidence="2">
    <location>
        <begin position="61"/>
        <end position="83"/>
    </location>
</feature>
<feature type="transmembrane region" description="Helical" evidence="2">
    <location>
        <begin position="95"/>
        <end position="113"/>
    </location>
</feature>
<feature type="transmembrane region" description="Helical" evidence="2">
    <location>
        <begin position="128"/>
        <end position="146"/>
    </location>
</feature>
<feature type="transmembrane region" description="Helical" evidence="2">
    <location>
        <begin position="153"/>
        <end position="175"/>
    </location>
</feature>
<feature type="topological domain" description="Cytoplasmic" evidence="2">
    <location>
        <begin position="176"/>
        <end position="763"/>
    </location>
</feature>
<feature type="domain" description="FtsK" evidence="3">
    <location>
        <begin position="416"/>
        <end position="613"/>
    </location>
</feature>
<feature type="region of interest" description="Disordered" evidence="4">
    <location>
        <begin position="1"/>
        <end position="24"/>
    </location>
</feature>
<feature type="region of interest" description="Disordered" evidence="4">
    <location>
        <begin position="668"/>
        <end position="693"/>
    </location>
</feature>
<feature type="compositionally biased region" description="Basic residues" evidence="4">
    <location>
        <begin position="7"/>
        <end position="18"/>
    </location>
</feature>
<feature type="compositionally biased region" description="Acidic residues" evidence="4">
    <location>
        <begin position="668"/>
        <end position="679"/>
    </location>
</feature>
<feature type="compositionally biased region" description="Polar residues" evidence="4">
    <location>
        <begin position="681"/>
        <end position="691"/>
    </location>
</feature>
<feature type="binding site" evidence="3">
    <location>
        <begin position="437"/>
        <end position="442"/>
    </location>
    <ligand>
        <name>ATP</name>
        <dbReference type="ChEBI" id="CHEBI:30616"/>
    </ligand>
</feature>
<organism>
    <name type="scientific">Lactococcus lactis subsp. lactis (strain IL1403)</name>
    <name type="common">Streptococcus lactis</name>
    <dbReference type="NCBI Taxonomy" id="272623"/>
    <lineage>
        <taxon>Bacteria</taxon>
        <taxon>Bacillati</taxon>
        <taxon>Bacillota</taxon>
        <taxon>Bacilli</taxon>
        <taxon>Lactobacillales</taxon>
        <taxon>Streptococcaceae</taxon>
        <taxon>Lactococcus</taxon>
    </lineage>
</organism>
<gene>
    <name type="primary">ftsK</name>
    <name type="ordered locus">LL1656</name>
    <name type="ORF">L0211</name>
</gene>
<evidence type="ECO:0000250" key="1"/>
<evidence type="ECO:0000255" key="2"/>
<evidence type="ECO:0000255" key="3">
    <source>
        <dbReference type="PROSITE-ProRule" id="PRU00289"/>
    </source>
</evidence>
<evidence type="ECO:0000256" key="4">
    <source>
        <dbReference type="SAM" id="MobiDB-lite"/>
    </source>
</evidence>
<evidence type="ECO:0000305" key="5"/>
<dbReference type="EMBL" id="AE005176">
    <property type="protein sequence ID" value="AAK05754.1"/>
    <property type="molecule type" value="Genomic_DNA"/>
</dbReference>
<dbReference type="PIR" id="H86831">
    <property type="entry name" value="H86831"/>
</dbReference>
<dbReference type="RefSeq" id="NP_267812.1">
    <property type="nucleotide sequence ID" value="NC_002662.1"/>
</dbReference>
<dbReference type="SMR" id="Q9CF25"/>
<dbReference type="PaxDb" id="272623-L0211"/>
<dbReference type="EnsemblBacteria" id="AAK05754">
    <property type="protein sequence ID" value="AAK05754"/>
    <property type="gene ID" value="L0211"/>
</dbReference>
<dbReference type="KEGG" id="lla:L0211"/>
<dbReference type="PATRIC" id="fig|272623.7.peg.1777"/>
<dbReference type="eggNOG" id="COG1674">
    <property type="taxonomic scope" value="Bacteria"/>
</dbReference>
<dbReference type="HOGENOM" id="CLU_001981_9_7_9"/>
<dbReference type="OrthoDB" id="9807790at2"/>
<dbReference type="Proteomes" id="UP000002196">
    <property type="component" value="Chromosome"/>
</dbReference>
<dbReference type="GO" id="GO:0005886">
    <property type="term" value="C:plasma membrane"/>
    <property type="evidence" value="ECO:0007669"/>
    <property type="project" value="UniProtKB-SubCell"/>
</dbReference>
<dbReference type="GO" id="GO:0005524">
    <property type="term" value="F:ATP binding"/>
    <property type="evidence" value="ECO:0007669"/>
    <property type="project" value="UniProtKB-KW"/>
</dbReference>
<dbReference type="GO" id="GO:0016887">
    <property type="term" value="F:ATP hydrolysis activity"/>
    <property type="evidence" value="ECO:0007669"/>
    <property type="project" value="InterPro"/>
</dbReference>
<dbReference type="GO" id="GO:0003677">
    <property type="term" value="F:DNA binding"/>
    <property type="evidence" value="ECO:0007669"/>
    <property type="project" value="UniProtKB-KW"/>
</dbReference>
<dbReference type="GO" id="GO:0051301">
    <property type="term" value="P:cell division"/>
    <property type="evidence" value="ECO:0007669"/>
    <property type="project" value="UniProtKB-KW"/>
</dbReference>
<dbReference type="GO" id="GO:0007059">
    <property type="term" value="P:chromosome segregation"/>
    <property type="evidence" value="ECO:0007669"/>
    <property type="project" value="UniProtKB-KW"/>
</dbReference>
<dbReference type="CDD" id="cd01127">
    <property type="entry name" value="TrwB_TraG_TraD_VirD4"/>
    <property type="match status" value="1"/>
</dbReference>
<dbReference type="Gene3D" id="3.30.980.40">
    <property type="match status" value="1"/>
</dbReference>
<dbReference type="Gene3D" id="3.40.50.300">
    <property type="entry name" value="P-loop containing nucleotide triphosphate hydrolases"/>
    <property type="match status" value="1"/>
</dbReference>
<dbReference type="Gene3D" id="1.10.10.10">
    <property type="entry name" value="Winged helix-like DNA-binding domain superfamily/Winged helix DNA-binding domain"/>
    <property type="match status" value="1"/>
</dbReference>
<dbReference type="InterPro" id="IPR003593">
    <property type="entry name" value="AAA+_ATPase"/>
</dbReference>
<dbReference type="InterPro" id="IPR050206">
    <property type="entry name" value="FtsK/SpoIIIE/SftA"/>
</dbReference>
<dbReference type="InterPro" id="IPR041027">
    <property type="entry name" value="FtsK_alpha"/>
</dbReference>
<dbReference type="InterPro" id="IPR002543">
    <property type="entry name" value="FtsK_dom"/>
</dbReference>
<dbReference type="InterPro" id="IPR018541">
    <property type="entry name" value="Ftsk_gamma"/>
</dbReference>
<dbReference type="InterPro" id="IPR027417">
    <property type="entry name" value="P-loop_NTPase"/>
</dbReference>
<dbReference type="InterPro" id="IPR036388">
    <property type="entry name" value="WH-like_DNA-bd_sf"/>
</dbReference>
<dbReference type="InterPro" id="IPR036390">
    <property type="entry name" value="WH_DNA-bd_sf"/>
</dbReference>
<dbReference type="PANTHER" id="PTHR22683:SF41">
    <property type="entry name" value="DNA TRANSLOCASE FTSK"/>
    <property type="match status" value="1"/>
</dbReference>
<dbReference type="PANTHER" id="PTHR22683">
    <property type="entry name" value="SPORULATION PROTEIN RELATED"/>
    <property type="match status" value="1"/>
</dbReference>
<dbReference type="Pfam" id="PF17854">
    <property type="entry name" value="FtsK_alpha"/>
    <property type="match status" value="1"/>
</dbReference>
<dbReference type="Pfam" id="PF09397">
    <property type="entry name" value="FtsK_gamma"/>
    <property type="match status" value="1"/>
</dbReference>
<dbReference type="Pfam" id="PF01580">
    <property type="entry name" value="FtsK_SpoIIIE"/>
    <property type="match status" value="1"/>
</dbReference>
<dbReference type="SMART" id="SM00382">
    <property type="entry name" value="AAA"/>
    <property type="match status" value="1"/>
</dbReference>
<dbReference type="SMART" id="SM00843">
    <property type="entry name" value="Ftsk_gamma"/>
    <property type="match status" value="1"/>
</dbReference>
<dbReference type="SUPFAM" id="SSF52540">
    <property type="entry name" value="P-loop containing nucleoside triphosphate hydrolases"/>
    <property type="match status" value="1"/>
</dbReference>
<dbReference type="SUPFAM" id="SSF46785">
    <property type="entry name" value="Winged helix' DNA-binding domain"/>
    <property type="match status" value="1"/>
</dbReference>
<dbReference type="PROSITE" id="PS50901">
    <property type="entry name" value="FTSK"/>
    <property type="match status" value="1"/>
</dbReference>
<accession>Q9CF25</accession>